<keyword id="KW-0378">Hydrolase</keyword>
<keyword id="KW-0719">Serine esterase</keyword>
<name>FRSA_YERPA</name>
<gene>
    <name evidence="1" type="primary">frsA</name>
    <name type="ordered locus">YPA_2716</name>
</gene>
<feature type="chain" id="PRO_1000064494" description="Esterase FrsA">
    <location>
        <begin position="1"/>
        <end position="415"/>
    </location>
</feature>
<reference key="1">
    <citation type="journal article" date="2006" name="J. Bacteriol.">
        <title>Complete genome sequence of Yersinia pestis strains Antiqua and Nepal516: evidence of gene reduction in an emerging pathogen.</title>
        <authorList>
            <person name="Chain P.S.G."/>
            <person name="Hu P."/>
            <person name="Malfatti S.A."/>
            <person name="Radnedge L."/>
            <person name="Larimer F."/>
            <person name="Vergez L.M."/>
            <person name="Worsham P."/>
            <person name="Chu M.C."/>
            <person name="Andersen G.L."/>
        </authorList>
    </citation>
    <scope>NUCLEOTIDE SEQUENCE [LARGE SCALE GENOMIC DNA]</scope>
    <source>
        <strain>Antiqua</strain>
    </source>
</reference>
<comment type="function">
    <text evidence="1">Catalyzes the hydrolysis of esters.</text>
</comment>
<comment type="catalytic activity">
    <reaction evidence="1">
        <text>a carboxylic ester + H2O = an alcohol + a carboxylate + H(+)</text>
        <dbReference type="Rhea" id="RHEA:21164"/>
        <dbReference type="ChEBI" id="CHEBI:15377"/>
        <dbReference type="ChEBI" id="CHEBI:15378"/>
        <dbReference type="ChEBI" id="CHEBI:29067"/>
        <dbReference type="ChEBI" id="CHEBI:30879"/>
        <dbReference type="ChEBI" id="CHEBI:33308"/>
        <dbReference type="EC" id="3.1.1.1"/>
    </reaction>
</comment>
<comment type="similarity">
    <text evidence="1">Belongs to the FrsA family.</text>
</comment>
<evidence type="ECO:0000255" key="1">
    <source>
        <dbReference type="HAMAP-Rule" id="MF_01063"/>
    </source>
</evidence>
<sequence length="415" mass="47007">MAQANLSEILFKPKFKHPETSTLVRRTHCNHVVNIHSALDGDTANHWYRMINRLMWTWRGIDPLEIEEVLSRIACSKAEHSNNELLDTVVGYRNGNWIYEWANQGMMWQQKAMEETDPGSAGQFWLNAANLYSIASYPHLKGDELSEQAEVLSNRAYEEAAKYLPYTLKELTFPISDGGSLSGFLHMPTVGSAPFPTVLMCGGLDTLQSDYHRLFRDYLEPKGIAMLTIDLPSVGASSRWKLTQDTSYLHQQVLQALADVPWVDHQRVSVFGFRFGANVAVRLGYLEPQRVRAVACLGPIVHHLLCNSDSLRKVPDMYMDVMASRLGMADSTDETLNTEMNRYSLKTQGLLGRRCQTPMLAGFWENDPFSPKEEAKLICSSSADGKLLAIPSKPLYENFHRALLQTSEWLEDKMR</sequence>
<organism>
    <name type="scientific">Yersinia pestis bv. Antiqua (strain Antiqua)</name>
    <dbReference type="NCBI Taxonomy" id="360102"/>
    <lineage>
        <taxon>Bacteria</taxon>
        <taxon>Pseudomonadati</taxon>
        <taxon>Pseudomonadota</taxon>
        <taxon>Gammaproteobacteria</taxon>
        <taxon>Enterobacterales</taxon>
        <taxon>Yersiniaceae</taxon>
        <taxon>Yersinia</taxon>
    </lineage>
</organism>
<protein>
    <recommendedName>
        <fullName evidence="1">Esterase FrsA</fullName>
        <ecNumber evidence="1">3.1.1.1</ecNumber>
    </recommendedName>
</protein>
<accession>Q1C4E4</accession>
<dbReference type="EC" id="3.1.1.1" evidence="1"/>
<dbReference type="EMBL" id="CP000308">
    <property type="protein sequence ID" value="ABG14678.1"/>
    <property type="molecule type" value="Genomic_DNA"/>
</dbReference>
<dbReference type="RefSeq" id="WP_002208703.1">
    <property type="nucleotide sequence ID" value="NZ_CP009906.1"/>
</dbReference>
<dbReference type="SMR" id="Q1C4E4"/>
<dbReference type="ESTHER" id="yerpe-y3224">
    <property type="family name" value="Duf_1100-R"/>
</dbReference>
<dbReference type="GeneID" id="57975494"/>
<dbReference type="KEGG" id="ypa:YPA_2716"/>
<dbReference type="Proteomes" id="UP000001971">
    <property type="component" value="Chromosome"/>
</dbReference>
<dbReference type="GO" id="GO:0106435">
    <property type="term" value="F:carboxylesterase activity"/>
    <property type="evidence" value="ECO:0007669"/>
    <property type="project" value="UniProtKB-EC"/>
</dbReference>
<dbReference type="FunFam" id="3.40.50.1820:FF:000022">
    <property type="entry name" value="Esterase FrsA"/>
    <property type="match status" value="1"/>
</dbReference>
<dbReference type="Gene3D" id="3.40.50.1820">
    <property type="entry name" value="alpha/beta hydrolase"/>
    <property type="match status" value="1"/>
</dbReference>
<dbReference type="HAMAP" id="MF_01063">
    <property type="entry name" value="FrsA"/>
    <property type="match status" value="1"/>
</dbReference>
<dbReference type="InterPro" id="IPR029058">
    <property type="entry name" value="AB_hydrolase_fold"/>
</dbReference>
<dbReference type="InterPro" id="IPR043423">
    <property type="entry name" value="FrsA"/>
</dbReference>
<dbReference type="InterPro" id="IPR010520">
    <property type="entry name" value="FrsA-like"/>
</dbReference>
<dbReference type="InterPro" id="IPR050261">
    <property type="entry name" value="FrsA_esterase"/>
</dbReference>
<dbReference type="NCBIfam" id="NF003460">
    <property type="entry name" value="PRK05077.1"/>
    <property type="match status" value="1"/>
</dbReference>
<dbReference type="PANTHER" id="PTHR22946">
    <property type="entry name" value="DIENELACTONE HYDROLASE DOMAIN-CONTAINING PROTEIN-RELATED"/>
    <property type="match status" value="1"/>
</dbReference>
<dbReference type="PANTHER" id="PTHR22946:SF4">
    <property type="entry name" value="ESTERASE FRSA"/>
    <property type="match status" value="1"/>
</dbReference>
<dbReference type="Pfam" id="PF06500">
    <property type="entry name" value="FrsA-like"/>
    <property type="match status" value="1"/>
</dbReference>
<dbReference type="SUPFAM" id="SSF53474">
    <property type="entry name" value="alpha/beta-Hydrolases"/>
    <property type="match status" value="1"/>
</dbReference>
<proteinExistence type="inferred from homology"/>